<keyword id="KW-0963">Cytoplasm</keyword>
<keyword id="KW-0704">Schiff base</keyword>
<keyword id="KW-0784">Thiamine biosynthesis</keyword>
<keyword id="KW-0808">Transferase</keyword>
<feature type="chain" id="PRO_1000124609" description="Thiazole synthase">
    <location>
        <begin position="1"/>
        <end position="258"/>
    </location>
</feature>
<feature type="active site" description="Schiff-base intermediate with DXP" evidence="1">
    <location>
        <position position="100"/>
    </location>
</feature>
<feature type="binding site" evidence="1">
    <location>
        <position position="161"/>
    </location>
    <ligand>
        <name>1-deoxy-D-xylulose 5-phosphate</name>
        <dbReference type="ChEBI" id="CHEBI:57792"/>
    </ligand>
</feature>
<feature type="binding site" evidence="1">
    <location>
        <begin position="187"/>
        <end position="188"/>
    </location>
    <ligand>
        <name>1-deoxy-D-xylulose 5-phosphate</name>
        <dbReference type="ChEBI" id="CHEBI:57792"/>
    </ligand>
</feature>
<feature type="binding site" evidence="1">
    <location>
        <begin position="209"/>
        <end position="210"/>
    </location>
    <ligand>
        <name>1-deoxy-D-xylulose 5-phosphate</name>
        <dbReference type="ChEBI" id="CHEBI:57792"/>
    </ligand>
</feature>
<sequence length="258" mass="27675">MQENLKNDKLKIGKYEFDSRFILGSGKYSLELIKSSIEEAKAQIITLALRRANTGEIANILDYIPKNITLLPNTSGARNADEALRIARLSRELGCGELIKIEVISDSRYLLPDNYETIKACELLAKEGFTPLPYMHADLYAARAMRDVGAAAIMPLAAPIGSNKGLCAKEFIQILLNEIDLPIIVDAGIGTPAQACEAMQMGVSAVMVNTAIAEAKDIALMARAFSLAVNAGRAAFLAGLASVSEAKASSPLTGFLRD</sequence>
<dbReference type="EC" id="2.8.1.10" evidence="1"/>
<dbReference type="EMBL" id="CP000768">
    <property type="protein sequence ID" value="ABS43917.1"/>
    <property type="molecule type" value="Genomic_DNA"/>
</dbReference>
<dbReference type="SMR" id="A7H2Z6"/>
<dbReference type="KEGG" id="cjd:JJD26997_0736"/>
<dbReference type="HOGENOM" id="CLU_062233_1_0_7"/>
<dbReference type="UniPathway" id="UPA00060"/>
<dbReference type="Proteomes" id="UP000002302">
    <property type="component" value="Chromosome"/>
</dbReference>
<dbReference type="GO" id="GO:0005737">
    <property type="term" value="C:cytoplasm"/>
    <property type="evidence" value="ECO:0007669"/>
    <property type="project" value="UniProtKB-SubCell"/>
</dbReference>
<dbReference type="GO" id="GO:1990107">
    <property type="term" value="F:thiazole synthase activity"/>
    <property type="evidence" value="ECO:0007669"/>
    <property type="project" value="UniProtKB-EC"/>
</dbReference>
<dbReference type="GO" id="GO:0009229">
    <property type="term" value="P:thiamine diphosphate biosynthetic process"/>
    <property type="evidence" value="ECO:0007669"/>
    <property type="project" value="UniProtKB-UniRule"/>
</dbReference>
<dbReference type="CDD" id="cd04728">
    <property type="entry name" value="ThiG"/>
    <property type="match status" value="1"/>
</dbReference>
<dbReference type="Gene3D" id="3.20.20.70">
    <property type="entry name" value="Aldolase class I"/>
    <property type="match status" value="1"/>
</dbReference>
<dbReference type="HAMAP" id="MF_00443">
    <property type="entry name" value="ThiG"/>
    <property type="match status" value="1"/>
</dbReference>
<dbReference type="InterPro" id="IPR013785">
    <property type="entry name" value="Aldolase_TIM"/>
</dbReference>
<dbReference type="InterPro" id="IPR033983">
    <property type="entry name" value="Thiazole_synthase_ThiG"/>
</dbReference>
<dbReference type="InterPro" id="IPR008867">
    <property type="entry name" value="ThiG"/>
</dbReference>
<dbReference type="PANTHER" id="PTHR34266">
    <property type="entry name" value="THIAZOLE SYNTHASE"/>
    <property type="match status" value="1"/>
</dbReference>
<dbReference type="PANTHER" id="PTHR34266:SF2">
    <property type="entry name" value="THIAZOLE SYNTHASE"/>
    <property type="match status" value="1"/>
</dbReference>
<dbReference type="Pfam" id="PF05690">
    <property type="entry name" value="ThiG"/>
    <property type="match status" value="1"/>
</dbReference>
<dbReference type="SUPFAM" id="SSF110399">
    <property type="entry name" value="ThiG-like"/>
    <property type="match status" value="1"/>
</dbReference>
<evidence type="ECO:0000255" key="1">
    <source>
        <dbReference type="HAMAP-Rule" id="MF_00443"/>
    </source>
</evidence>
<protein>
    <recommendedName>
        <fullName evidence="1">Thiazole synthase</fullName>
        <ecNumber evidence="1">2.8.1.10</ecNumber>
    </recommendedName>
</protein>
<accession>A7H2Z6</accession>
<name>THIG_CAMJD</name>
<reference key="1">
    <citation type="submission" date="2007-07" db="EMBL/GenBank/DDBJ databases">
        <title>Complete genome sequence of Campylobacter jejuni subsp doylei 269.97 isolated from human blood.</title>
        <authorList>
            <person name="Fouts D.E."/>
            <person name="Mongodin E.F."/>
            <person name="Puiu D."/>
            <person name="Sebastian Y."/>
            <person name="Miller W.G."/>
            <person name="Mandrell R.E."/>
            <person name="Lastovica A.J."/>
            <person name="Nelson K.E."/>
        </authorList>
    </citation>
    <scope>NUCLEOTIDE SEQUENCE [LARGE SCALE GENOMIC DNA]</scope>
    <source>
        <strain>ATCC BAA-1458 / RM4099 / 269.97</strain>
    </source>
</reference>
<comment type="function">
    <text evidence="1">Catalyzes the rearrangement of 1-deoxy-D-xylulose 5-phosphate (DXP) to produce the thiazole phosphate moiety of thiamine. Sulfur is provided by the thiocarboxylate moiety of the carrier protein ThiS. In vitro, sulfur can be provided by H(2)S.</text>
</comment>
<comment type="catalytic activity">
    <reaction evidence="1">
        <text>[ThiS sulfur-carrier protein]-C-terminal-Gly-aminoethanethioate + 2-iminoacetate + 1-deoxy-D-xylulose 5-phosphate = [ThiS sulfur-carrier protein]-C-terminal Gly-Gly + 2-[(2R,5Z)-2-carboxy-4-methylthiazol-5(2H)-ylidene]ethyl phosphate + 2 H2O + H(+)</text>
        <dbReference type="Rhea" id="RHEA:26297"/>
        <dbReference type="Rhea" id="RHEA-COMP:12909"/>
        <dbReference type="Rhea" id="RHEA-COMP:19908"/>
        <dbReference type="ChEBI" id="CHEBI:15377"/>
        <dbReference type="ChEBI" id="CHEBI:15378"/>
        <dbReference type="ChEBI" id="CHEBI:57792"/>
        <dbReference type="ChEBI" id="CHEBI:62899"/>
        <dbReference type="ChEBI" id="CHEBI:77846"/>
        <dbReference type="ChEBI" id="CHEBI:90778"/>
        <dbReference type="ChEBI" id="CHEBI:232372"/>
        <dbReference type="EC" id="2.8.1.10"/>
    </reaction>
</comment>
<comment type="pathway">
    <text evidence="1">Cofactor biosynthesis; thiamine diphosphate biosynthesis.</text>
</comment>
<comment type="subunit">
    <text evidence="1">Homotetramer. Forms heterodimers with either ThiH or ThiS.</text>
</comment>
<comment type="subcellular location">
    <subcellularLocation>
        <location evidence="1">Cytoplasm</location>
    </subcellularLocation>
</comment>
<comment type="similarity">
    <text evidence="1">Belongs to the ThiG family.</text>
</comment>
<organism>
    <name type="scientific">Campylobacter jejuni subsp. doylei (strain ATCC BAA-1458 / RM4099 / 269.97)</name>
    <dbReference type="NCBI Taxonomy" id="360109"/>
    <lineage>
        <taxon>Bacteria</taxon>
        <taxon>Pseudomonadati</taxon>
        <taxon>Campylobacterota</taxon>
        <taxon>Epsilonproteobacteria</taxon>
        <taxon>Campylobacterales</taxon>
        <taxon>Campylobacteraceae</taxon>
        <taxon>Campylobacter</taxon>
    </lineage>
</organism>
<proteinExistence type="inferred from homology"/>
<gene>
    <name evidence="1" type="primary">thiG</name>
    <name type="ordered locus">JJD26997_0736</name>
</gene>